<feature type="chain" id="PRO_0000092246" description="Sulfate/thiosulfate import ATP-binding protein CysA 1">
    <location>
        <begin position="1"/>
        <end position="346"/>
    </location>
</feature>
<feature type="domain" description="ABC transporter" evidence="1">
    <location>
        <begin position="3"/>
        <end position="237"/>
    </location>
</feature>
<feature type="binding site" evidence="1">
    <location>
        <begin position="35"/>
        <end position="42"/>
    </location>
    <ligand>
        <name>ATP</name>
        <dbReference type="ChEBI" id="CHEBI:30616"/>
    </ligand>
</feature>
<sequence>MEVKVSGITKQFDRFPALNDVSLDIRSGELIALLGPSGSGKTTLLRLIAGLEQPTQGQIFFGDEDASHRTVQERNVGFVFQHYALFRHMTVADNIAFGLKVRPSASRPPKAEIRRRVSELLDMVHLTGLEKRYPTQLSGGQRQRVALARAVAIEPKVLLLDEPFGALDAKVRKELRRWLREFHDRTGHTTVFVTHDQEEALELADRVVVMSQGKIEQVGTADDVYDTPNSPFVFSFIGESSSLPVTIRDGHVLFQGESIGINEGGTGEGELFFRPEDVVLTDEKDALYGKVTTCRRLAGTRIAEIDIANNGHEPYHLEIEVPLNAAVAVGAELRFRPTRWKVFGKK</sequence>
<proteinExistence type="inferred from homology"/>
<name>CYSA1_AGRFC</name>
<evidence type="ECO:0000255" key="1">
    <source>
        <dbReference type="HAMAP-Rule" id="MF_01701"/>
    </source>
</evidence>
<dbReference type="EC" id="7.3.2.3" evidence="1"/>
<dbReference type="EMBL" id="AE007869">
    <property type="protein sequence ID" value="AAK86630.2"/>
    <property type="molecule type" value="Genomic_DNA"/>
</dbReference>
<dbReference type="PIR" id="AG2677">
    <property type="entry name" value="AG2677"/>
</dbReference>
<dbReference type="PIR" id="E97459">
    <property type="entry name" value="E97459"/>
</dbReference>
<dbReference type="RefSeq" id="NP_353845.2">
    <property type="nucleotide sequence ID" value="NC_003062.2"/>
</dbReference>
<dbReference type="RefSeq" id="WP_010971173.1">
    <property type="nucleotide sequence ID" value="NC_003062.2"/>
</dbReference>
<dbReference type="SMR" id="Q8UH62"/>
<dbReference type="STRING" id="176299.Atu0823"/>
<dbReference type="EnsemblBacteria" id="AAK86630">
    <property type="protein sequence ID" value="AAK86630"/>
    <property type="gene ID" value="Atu0823"/>
</dbReference>
<dbReference type="GeneID" id="1132861"/>
<dbReference type="KEGG" id="atu:Atu0823"/>
<dbReference type="PATRIC" id="fig|176299.10.peg.820"/>
<dbReference type="eggNOG" id="COG1118">
    <property type="taxonomic scope" value="Bacteria"/>
</dbReference>
<dbReference type="HOGENOM" id="CLU_000604_1_1_5"/>
<dbReference type="OrthoDB" id="9802264at2"/>
<dbReference type="PhylomeDB" id="Q8UH62"/>
<dbReference type="Proteomes" id="UP000000813">
    <property type="component" value="Chromosome circular"/>
</dbReference>
<dbReference type="GO" id="GO:0043190">
    <property type="term" value="C:ATP-binding cassette (ABC) transporter complex"/>
    <property type="evidence" value="ECO:0007669"/>
    <property type="project" value="InterPro"/>
</dbReference>
<dbReference type="GO" id="GO:0015419">
    <property type="term" value="F:ABC-type sulfate transporter activity"/>
    <property type="evidence" value="ECO:0007669"/>
    <property type="project" value="InterPro"/>
</dbReference>
<dbReference type="GO" id="GO:0102025">
    <property type="term" value="F:ABC-type thiosulfate transporter activity"/>
    <property type="evidence" value="ECO:0007669"/>
    <property type="project" value="RHEA"/>
</dbReference>
<dbReference type="GO" id="GO:0005524">
    <property type="term" value="F:ATP binding"/>
    <property type="evidence" value="ECO:0007669"/>
    <property type="project" value="UniProtKB-KW"/>
</dbReference>
<dbReference type="GO" id="GO:0016887">
    <property type="term" value="F:ATP hydrolysis activity"/>
    <property type="evidence" value="ECO:0007669"/>
    <property type="project" value="InterPro"/>
</dbReference>
<dbReference type="CDD" id="cd03296">
    <property type="entry name" value="ABC_CysA_sulfate_importer"/>
    <property type="match status" value="1"/>
</dbReference>
<dbReference type="FunFam" id="3.40.50.300:FF:000227">
    <property type="entry name" value="Sulfate/thiosulfate import ATP-binding protein CysA"/>
    <property type="match status" value="1"/>
</dbReference>
<dbReference type="Gene3D" id="3.40.50.300">
    <property type="entry name" value="P-loop containing nucleotide triphosphate hydrolases"/>
    <property type="match status" value="1"/>
</dbReference>
<dbReference type="InterPro" id="IPR003593">
    <property type="entry name" value="AAA+_ATPase"/>
</dbReference>
<dbReference type="InterPro" id="IPR050093">
    <property type="entry name" value="ABC_SmlMolc_Importer"/>
</dbReference>
<dbReference type="InterPro" id="IPR003439">
    <property type="entry name" value="ABC_transporter-like_ATP-bd"/>
</dbReference>
<dbReference type="InterPro" id="IPR017871">
    <property type="entry name" value="ABC_transporter-like_CS"/>
</dbReference>
<dbReference type="InterPro" id="IPR027417">
    <property type="entry name" value="P-loop_NTPase"/>
</dbReference>
<dbReference type="InterPro" id="IPR005666">
    <property type="entry name" value="Sulph_transpt1"/>
</dbReference>
<dbReference type="InterPro" id="IPR024765">
    <property type="entry name" value="TOBE-like"/>
</dbReference>
<dbReference type="NCBIfam" id="TIGR00968">
    <property type="entry name" value="3a0106s01"/>
    <property type="match status" value="1"/>
</dbReference>
<dbReference type="PANTHER" id="PTHR42781">
    <property type="entry name" value="SPERMIDINE/PUTRESCINE IMPORT ATP-BINDING PROTEIN POTA"/>
    <property type="match status" value="1"/>
</dbReference>
<dbReference type="PANTHER" id="PTHR42781:SF4">
    <property type="entry name" value="SPERMIDINE_PUTRESCINE IMPORT ATP-BINDING PROTEIN POTA"/>
    <property type="match status" value="1"/>
</dbReference>
<dbReference type="Pfam" id="PF00005">
    <property type="entry name" value="ABC_tran"/>
    <property type="match status" value="1"/>
</dbReference>
<dbReference type="Pfam" id="PF12857">
    <property type="entry name" value="TOBE_3"/>
    <property type="match status" value="1"/>
</dbReference>
<dbReference type="SMART" id="SM00382">
    <property type="entry name" value="AAA"/>
    <property type="match status" value="1"/>
</dbReference>
<dbReference type="SUPFAM" id="SSF52540">
    <property type="entry name" value="P-loop containing nucleoside triphosphate hydrolases"/>
    <property type="match status" value="1"/>
</dbReference>
<dbReference type="PROSITE" id="PS00211">
    <property type="entry name" value="ABC_TRANSPORTER_1"/>
    <property type="match status" value="1"/>
</dbReference>
<dbReference type="PROSITE" id="PS50893">
    <property type="entry name" value="ABC_TRANSPORTER_2"/>
    <property type="match status" value="1"/>
</dbReference>
<dbReference type="PROSITE" id="PS51237">
    <property type="entry name" value="CYSA"/>
    <property type="match status" value="1"/>
</dbReference>
<protein>
    <recommendedName>
        <fullName evidence="1">Sulfate/thiosulfate import ATP-binding protein CysA 1</fullName>
        <ecNumber evidence="1">7.3.2.3</ecNumber>
    </recommendedName>
    <alternativeName>
        <fullName evidence="1">Sulfate-transporting ATPase 1</fullName>
    </alternativeName>
</protein>
<keyword id="KW-0067">ATP-binding</keyword>
<keyword id="KW-0997">Cell inner membrane</keyword>
<keyword id="KW-1003">Cell membrane</keyword>
<keyword id="KW-0472">Membrane</keyword>
<keyword id="KW-0547">Nucleotide-binding</keyword>
<keyword id="KW-1185">Reference proteome</keyword>
<keyword id="KW-0764">Sulfate transport</keyword>
<keyword id="KW-1278">Translocase</keyword>
<keyword id="KW-0813">Transport</keyword>
<gene>
    <name evidence="1" type="primary">cysA1</name>
    <name type="ordered locus">Atu0823</name>
    <name type="ORF">AGR_C_1506</name>
</gene>
<reference key="1">
    <citation type="journal article" date="2001" name="Science">
        <title>The genome of the natural genetic engineer Agrobacterium tumefaciens C58.</title>
        <authorList>
            <person name="Wood D.W."/>
            <person name="Setubal J.C."/>
            <person name="Kaul R."/>
            <person name="Monks D.E."/>
            <person name="Kitajima J.P."/>
            <person name="Okura V.K."/>
            <person name="Zhou Y."/>
            <person name="Chen L."/>
            <person name="Wood G.E."/>
            <person name="Almeida N.F. Jr."/>
            <person name="Woo L."/>
            <person name="Chen Y."/>
            <person name="Paulsen I.T."/>
            <person name="Eisen J.A."/>
            <person name="Karp P.D."/>
            <person name="Bovee D. Sr."/>
            <person name="Chapman P."/>
            <person name="Clendenning J."/>
            <person name="Deatherage G."/>
            <person name="Gillet W."/>
            <person name="Grant C."/>
            <person name="Kutyavin T."/>
            <person name="Levy R."/>
            <person name="Li M.-J."/>
            <person name="McClelland E."/>
            <person name="Palmieri A."/>
            <person name="Raymond C."/>
            <person name="Rouse G."/>
            <person name="Saenphimmachak C."/>
            <person name="Wu Z."/>
            <person name="Romero P."/>
            <person name="Gordon D."/>
            <person name="Zhang S."/>
            <person name="Yoo H."/>
            <person name="Tao Y."/>
            <person name="Biddle P."/>
            <person name="Jung M."/>
            <person name="Krespan W."/>
            <person name="Perry M."/>
            <person name="Gordon-Kamm B."/>
            <person name="Liao L."/>
            <person name="Kim S."/>
            <person name="Hendrick C."/>
            <person name="Zhao Z.-Y."/>
            <person name="Dolan M."/>
            <person name="Chumley F."/>
            <person name="Tingey S.V."/>
            <person name="Tomb J.-F."/>
            <person name="Gordon M.P."/>
            <person name="Olson M.V."/>
            <person name="Nester E.W."/>
        </authorList>
    </citation>
    <scope>NUCLEOTIDE SEQUENCE [LARGE SCALE GENOMIC DNA]</scope>
    <source>
        <strain>C58 / ATCC 33970</strain>
    </source>
</reference>
<reference key="2">
    <citation type="journal article" date="2001" name="Science">
        <title>Genome sequence of the plant pathogen and biotechnology agent Agrobacterium tumefaciens C58.</title>
        <authorList>
            <person name="Goodner B."/>
            <person name="Hinkle G."/>
            <person name="Gattung S."/>
            <person name="Miller N."/>
            <person name="Blanchard M."/>
            <person name="Qurollo B."/>
            <person name="Goldman B.S."/>
            <person name="Cao Y."/>
            <person name="Askenazi M."/>
            <person name="Halling C."/>
            <person name="Mullin L."/>
            <person name="Houmiel K."/>
            <person name="Gordon J."/>
            <person name="Vaudin M."/>
            <person name="Iartchouk O."/>
            <person name="Epp A."/>
            <person name="Liu F."/>
            <person name="Wollam C."/>
            <person name="Allinger M."/>
            <person name="Doughty D."/>
            <person name="Scott C."/>
            <person name="Lappas C."/>
            <person name="Markelz B."/>
            <person name="Flanagan C."/>
            <person name="Crowell C."/>
            <person name="Gurson J."/>
            <person name="Lomo C."/>
            <person name="Sear C."/>
            <person name="Strub G."/>
            <person name="Cielo C."/>
            <person name="Slater S."/>
        </authorList>
    </citation>
    <scope>NUCLEOTIDE SEQUENCE [LARGE SCALE GENOMIC DNA]</scope>
    <source>
        <strain>C58 / ATCC 33970</strain>
    </source>
</reference>
<accession>Q8UH62</accession>
<comment type="function">
    <text evidence="1">Part of the ABC transporter complex CysAWTP involved in sulfate/thiosulfate import. Responsible for energy coupling to the transport system.</text>
</comment>
<comment type="catalytic activity">
    <reaction evidence="1">
        <text>sulfate(out) + ATP + H2O = sulfate(in) + ADP + phosphate + H(+)</text>
        <dbReference type="Rhea" id="RHEA:10192"/>
        <dbReference type="ChEBI" id="CHEBI:15377"/>
        <dbReference type="ChEBI" id="CHEBI:15378"/>
        <dbReference type="ChEBI" id="CHEBI:16189"/>
        <dbReference type="ChEBI" id="CHEBI:30616"/>
        <dbReference type="ChEBI" id="CHEBI:43474"/>
        <dbReference type="ChEBI" id="CHEBI:456216"/>
        <dbReference type="EC" id="7.3.2.3"/>
    </reaction>
</comment>
<comment type="catalytic activity">
    <reaction evidence="1">
        <text>thiosulfate(out) + ATP + H2O = thiosulfate(in) + ADP + phosphate + H(+)</text>
        <dbReference type="Rhea" id="RHEA:29871"/>
        <dbReference type="ChEBI" id="CHEBI:15377"/>
        <dbReference type="ChEBI" id="CHEBI:15378"/>
        <dbReference type="ChEBI" id="CHEBI:30616"/>
        <dbReference type="ChEBI" id="CHEBI:33542"/>
        <dbReference type="ChEBI" id="CHEBI:43474"/>
        <dbReference type="ChEBI" id="CHEBI:456216"/>
        <dbReference type="EC" id="7.3.2.3"/>
    </reaction>
</comment>
<comment type="subunit">
    <text evidence="1">The complex is composed of two ATP-binding proteins (CysA), two transmembrane proteins (CysT and CysW) and a solute-binding protein (CysP).</text>
</comment>
<comment type="subcellular location">
    <subcellularLocation>
        <location evidence="1">Cell inner membrane</location>
        <topology evidence="1">Peripheral membrane protein</topology>
    </subcellularLocation>
</comment>
<comment type="similarity">
    <text evidence="1">Belongs to the ABC transporter superfamily. Sulfate/tungstate importer (TC 3.A.1.6) family.</text>
</comment>
<organism>
    <name type="scientific">Agrobacterium fabrum (strain C58 / ATCC 33970)</name>
    <name type="common">Agrobacterium tumefaciens (strain C58)</name>
    <dbReference type="NCBI Taxonomy" id="176299"/>
    <lineage>
        <taxon>Bacteria</taxon>
        <taxon>Pseudomonadati</taxon>
        <taxon>Pseudomonadota</taxon>
        <taxon>Alphaproteobacteria</taxon>
        <taxon>Hyphomicrobiales</taxon>
        <taxon>Rhizobiaceae</taxon>
        <taxon>Rhizobium/Agrobacterium group</taxon>
        <taxon>Agrobacterium</taxon>
        <taxon>Agrobacterium tumefaciens complex</taxon>
    </lineage>
</organism>